<reference key="1">
    <citation type="submission" date="2005-11" db="EMBL/GenBank/DDBJ databases">
        <title>The complete genome sequence of Lawsonia intracellularis: the causative agent of proliferative enteropathy.</title>
        <authorList>
            <person name="Kaur K."/>
            <person name="Zhang Q."/>
            <person name="Beckler D."/>
            <person name="Munir S."/>
            <person name="Li L."/>
            <person name="Kinsley K."/>
            <person name="Herron L."/>
            <person name="Peterson A."/>
            <person name="May B."/>
            <person name="Singh S."/>
            <person name="Gebhart C."/>
            <person name="Kapur V."/>
        </authorList>
    </citation>
    <scope>NUCLEOTIDE SEQUENCE [LARGE SCALE GENOMIC DNA]</scope>
    <source>
        <strain>PHE/MN1-00</strain>
    </source>
</reference>
<accession>Q1MS78</accession>
<gene>
    <name evidence="1" type="primary">eno</name>
    <name type="ordered locus">LI0091</name>
</gene>
<organism>
    <name type="scientific">Lawsonia intracellularis (strain PHE/MN1-00)</name>
    <dbReference type="NCBI Taxonomy" id="363253"/>
    <lineage>
        <taxon>Bacteria</taxon>
        <taxon>Pseudomonadati</taxon>
        <taxon>Thermodesulfobacteriota</taxon>
        <taxon>Desulfovibrionia</taxon>
        <taxon>Desulfovibrionales</taxon>
        <taxon>Desulfovibrionaceae</taxon>
        <taxon>Lawsonia</taxon>
    </lineage>
</organism>
<feature type="chain" id="PRO_0000267050" description="Enolase">
    <location>
        <begin position="1"/>
        <end position="433"/>
    </location>
</feature>
<feature type="active site" description="Proton donor" evidence="1">
    <location>
        <position position="205"/>
    </location>
</feature>
<feature type="active site" description="Proton acceptor" evidence="1">
    <location>
        <position position="337"/>
    </location>
</feature>
<feature type="binding site" evidence="1">
    <location>
        <position position="163"/>
    </location>
    <ligand>
        <name>(2R)-2-phosphoglycerate</name>
        <dbReference type="ChEBI" id="CHEBI:58289"/>
    </ligand>
</feature>
<feature type="binding site" evidence="1">
    <location>
        <position position="242"/>
    </location>
    <ligand>
        <name>Mg(2+)</name>
        <dbReference type="ChEBI" id="CHEBI:18420"/>
    </ligand>
</feature>
<feature type="binding site" evidence="1">
    <location>
        <position position="285"/>
    </location>
    <ligand>
        <name>Mg(2+)</name>
        <dbReference type="ChEBI" id="CHEBI:18420"/>
    </ligand>
</feature>
<feature type="binding site" evidence="1">
    <location>
        <position position="312"/>
    </location>
    <ligand>
        <name>Mg(2+)</name>
        <dbReference type="ChEBI" id="CHEBI:18420"/>
    </ligand>
</feature>
<feature type="binding site" evidence="1">
    <location>
        <position position="337"/>
    </location>
    <ligand>
        <name>(2R)-2-phosphoglycerate</name>
        <dbReference type="ChEBI" id="CHEBI:58289"/>
    </ligand>
</feature>
<feature type="binding site" evidence="1">
    <location>
        <position position="366"/>
    </location>
    <ligand>
        <name>(2R)-2-phosphoglycerate</name>
        <dbReference type="ChEBI" id="CHEBI:58289"/>
    </ligand>
</feature>
<feature type="binding site" evidence="1">
    <location>
        <position position="367"/>
    </location>
    <ligand>
        <name>(2R)-2-phosphoglycerate</name>
        <dbReference type="ChEBI" id="CHEBI:58289"/>
    </ligand>
</feature>
<feature type="binding site" evidence="1">
    <location>
        <position position="388"/>
    </location>
    <ligand>
        <name>(2R)-2-phosphoglycerate</name>
        <dbReference type="ChEBI" id="CHEBI:58289"/>
    </ligand>
</feature>
<evidence type="ECO:0000255" key="1">
    <source>
        <dbReference type="HAMAP-Rule" id="MF_00318"/>
    </source>
</evidence>
<dbReference type="EC" id="4.2.1.11" evidence="1"/>
<dbReference type="EMBL" id="AM180252">
    <property type="protein sequence ID" value="CAJ54147.1"/>
    <property type="molecule type" value="Genomic_DNA"/>
</dbReference>
<dbReference type="RefSeq" id="WP_011526174.1">
    <property type="nucleotide sequence ID" value="NC_008011.1"/>
</dbReference>
<dbReference type="SMR" id="Q1MS78"/>
<dbReference type="STRING" id="363253.LI0091"/>
<dbReference type="KEGG" id="lip:LI0091"/>
<dbReference type="eggNOG" id="COG0148">
    <property type="taxonomic scope" value="Bacteria"/>
</dbReference>
<dbReference type="HOGENOM" id="CLU_031223_2_1_7"/>
<dbReference type="OrthoDB" id="9804716at2"/>
<dbReference type="UniPathway" id="UPA00109">
    <property type="reaction ID" value="UER00187"/>
</dbReference>
<dbReference type="Proteomes" id="UP000002430">
    <property type="component" value="Chromosome"/>
</dbReference>
<dbReference type="GO" id="GO:0009986">
    <property type="term" value="C:cell surface"/>
    <property type="evidence" value="ECO:0007669"/>
    <property type="project" value="UniProtKB-SubCell"/>
</dbReference>
<dbReference type="GO" id="GO:0005576">
    <property type="term" value="C:extracellular region"/>
    <property type="evidence" value="ECO:0007669"/>
    <property type="project" value="UniProtKB-SubCell"/>
</dbReference>
<dbReference type="GO" id="GO:0000015">
    <property type="term" value="C:phosphopyruvate hydratase complex"/>
    <property type="evidence" value="ECO:0007669"/>
    <property type="project" value="InterPro"/>
</dbReference>
<dbReference type="GO" id="GO:0000287">
    <property type="term" value="F:magnesium ion binding"/>
    <property type="evidence" value="ECO:0007669"/>
    <property type="project" value="UniProtKB-UniRule"/>
</dbReference>
<dbReference type="GO" id="GO:0004634">
    <property type="term" value="F:phosphopyruvate hydratase activity"/>
    <property type="evidence" value="ECO:0007669"/>
    <property type="project" value="UniProtKB-UniRule"/>
</dbReference>
<dbReference type="GO" id="GO:0006096">
    <property type="term" value="P:glycolytic process"/>
    <property type="evidence" value="ECO:0007669"/>
    <property type="project" value="UniProtKB-UniRule"/>
</dbReference>
<dbReference type="CDD" id="cd03313">
    <property type="entry name" value="enolase"/>
    <property type="match status" value="1"/>
</dbReference>
<dbReference type="FunFam" id="3.20.20.120:FF:000001">
    <property type="entry name" value="Enolase"/>
    <property type="match status" value="1"/>
</dbReference>
<dbReference type="FunFam" id="3.30.390.10:FF:000001">
    <property type="entry name" value="Enolase"/>
    <property type="match status" value="1"/>
</dbReference>
<dbReference type="Gene3D" id="3.20.20.120">
    <property type="entry name" value="Enolase-like C-terminal domain"/>
    <property type="match status" value="1"/>
</dbReference>
<dbReference type="Gene3D" id="3.30.390.10">
    <property type="entry name" value="Enolase-like, N-terminal domain"/>
    <property type="match status" value="1"/>
</dbReference>
<dbReference type="HAMAP" id="MF_00318">
    <property type="entry name" value="Enolase"/>
    <property type="match status" value="1"/>
</dbReference>
<dbReference type="InterPro" id="IPR000941">
    <property type="entry name" value="Enolase"/>
</dbReference>
<dbReference type="InterPro" id="IPR036849">
    <property type="entry name" value="Enolase-like_C_sf"/>
</dbReference>
<dbReference type="InterPro" id="IPR029017">
    <property type="entry name" value="Enolase-like_N"/>
</dbReference>
<dbReference type="InterPro" id="IPR020810">
    <property type="entry name" value="Enolase_C"/>
</dbReference>
<dbReference type="InterPro" id="IPR020809">
    <property type="entry name" value="Enolase_CS"/>
</dbReference>
<dbReference type="InterPro" id="IPR020811">
    <property type="entry name" value="Enolase_N"/>
</dbReference>
<dbReference type="NCBIfam" id="TIGR01060">
    <property type="entry name" value="eno"/>
    <property type="match status" value="1"/>
</dbReference>
<dbReference type="PANTHER" id="PTHR11902">
    <property type="entry name" value="ENOLASE"/>
    <property type="match status" value="1"/>
</dbReference>
<dbReference type="PANTHER" id="PTHR11902:SF1">
    <property type="entry name" value="ENOLASE"/>
    <property type="match status" value="1"/>
</dbReference>
<dbReference type="Pfam" id="PF00113">
    <property type="entry name" value="Enolase_C"/>
    <property type="match status" value="1"/>
</dbReference>
<dbReference type="Pfam" id="PF03952">
    <property type="entry name" value="Enolase_N"/>
    <property type="match status" value="1"/>
</dbReference>
<dbReference type="PIRSF" id="PIRSF001400">
    <property type="entry name" value="Enolase"/>
    <property type="match status" value="1"/>
</dbReference>
<dbReference type="PRINTS" id="PR00148">
    <property type="entry name" value="ENOLASE"/>
</dbReference>
<dbReference type="SFLD" id="SFLDS00001">
    <property type="entry name" value="Enolase"/>
    <property type="match status" value="1"/>
</dbReference>
<dbReference type="SFLD" id="SFLDF00002">
    <property type="entry name" value="enolase"/>
    <property type="match status" value="1"/>
</dbReference>
<dbReference type="SMART" id="SM01192">
    <property type="entry name" value="Enolase_C"/>
    <property type="match status" value="1"/>
</dbReference>
<dbReference type="SMART" id="SM01193">
    <property type="entry name" value="Enolase_N"/>
    <property type="match status" value="1"/>
</dbReference>
<dbReference type="SUPFAM" id="SSF51604">
    <property type="entry name" value="Enolase C-terminal domain-like"/>
    <property type="match status" value="1"/>
</dbReference>
<dbReference type="SUPFAM" id="SSF54826">
    <property type="entry name" value="Enolase N-terminal domain-like"/>
    <property type="match status" value="1"/>
</dbReference>
<dbReference type="PROSITE" id="PS00164">
    <property type="entry name" value="ENOLASE"/>
    <property type="match status" value="1"/>
</dbReference>
<protein>
    <recommendedName>
        <fullName evidence="1">Enolase</fullName>
        <ecNumber evidence="1">4.2.1.11</ecNumber>
    </recommendedName>
    <alternativeName>
        <fullName evidence="1">2-phospho-D-glycerate hydro-lyase</fullName>
    </alternativeName>
    <alternativeName>
        <fullName evidence="1">2-phosphoglycerate dehydratase</fullName>
    </alternativeName>
</protein>
<proteinExistence type="inferred from homology"/>
<keyword id="KW-0963">Cytoplasm</keyword>
<keyword id="KW-0324">Glycolysis</keyword>
<keyword id="KW-0456">Lyase</keyword>
<keyword id="KW-0460">Magnesium</keyword>
<keyword id="KW-0479">Metal-binding</keyword>
<keyword id="KW-1185">Reference proteome</keyword>
<keyword id="KW-0964">Secreted</keyword>
<comment type="function">
    <text evidence="1">Catalyzes the reversible conversion of 2-phosphoglycerate (2-PG) into phosphoenolpyruvate (PEP). It is essential for the degradation of carbohydrates via glycolysis.</text>
</comment>
<comment type="catalytic activity">
    <reaction evidence="1">
        <text>(2R)-2-phosphoglycerate = phosphoenolpyruvate + H2O</text>
        <dbReference type="Rhea" id="RHEA:10164"/>
        <dbReference type="ChEBI" id="CHEBI:15377"/>
        <dbReference type="ChEBI" id="CHEBI:58289"/>
        <dbReference type="ChEBI" id="CHEBI:58702"/>
        <dbReference type="EC" id="4.2.1.11"/>
    </reaction>
</comment>
<comment type="cofactor">
    <cofactor evidence="1">
        <name>Mg(2+)</name>
        <dbReference type="ChEBI" id="CHEBI:18420"/>
    </cofactor>
    <text evidence="1">Binds a second Mg(2+) ion via substrate during catalysis.</text>
</comment>
<comment type="pathway">
    <text evidence="1">Carbohydrate degradation; glycolysis; pyruvate from D-glyceraldehyde 3-phosphate: step 4/5.</text>
</comment>
<comment type="subcellular location">
    <subcellularLocation>
        <location evidence="1">Cytoplasm</location>
    </subcellularLocation>
    <subcellularLocation>
        <location evidence="1">Secreted</location>
    </subcellularLocation>
    <subcellularLocation>
        <location evidence="1">Cell surface</location>
    </subcellularLocation>
    <text evidence="1">Fractions of enolase are present in both the cytoplasm and on the cell surface.</text>
</comment>
<comment type="similarity">
    <text evidence="1">Belongs to the enolase family.</text>
</comment>
<name>ENO_LAWIP</name>
<sequence length="433" mass="46859">MTAIASIWAREILDSRGNPTVEVEVTLDSGYIGRAAVPSGASTGTREALELRDGDKQRYNGKGVLKVVEAVNGPISEAVIGIDALRQVQVDNTLIDLDGTDNKSKLGANAILGVSLATARAAAEAVGLPLYQYIGGTNAKVLPVPLMNVINGGAHAPNNLDIQEFMIMPVGAETFRDALRMGAEIFHTLKTILSADGHVTSVGDEGGFAPHLKSHDEAFQYLVKAIEEAGYNPGSEVMLAIDVAASEFYKDKRYFLTEYKTPLNSEEMIEWLKGFTSRYPLISIEDGLAENDWDGWRELTVELGNDIQLVGDDIFVTNPIMLSQGVEEGIGNSILIKVNQIGTLTETLDTIELAKQSAYTTIVSHRSGETEDSFIADLAVGINAGQIKTGSLSRSDRLAKYNQLLRIEEELEDSAIYYGPVFSESNHSCCDHT</sequence>